<comment type="function">
    <text evidence="3">Key enzyme in myo-inositol biosynthesis pathway that catalyzes the conversion of glucose 6-phosphate to 1-myo-inositol 1-phosphate in a NAD-dependent manner.</text>
</comment>
<comment type="catalytic activity">
    <reaction evidence="3">
        <text>D-glucose 6-phosphate = 1D-myo-inositol 3-phosphate</text>
        <dbReference type="Rhea" id="RHEA:10716"/>
        <dbReference type="ChEBI" id="CHEBI:58401"/>
        <dbReference type="ChEBI" id="CHEBI:61548"/>
        <dbReference type="EC" id="5.5.1.4"/>
    </reaction>
</comment>
<comment type="cofactor">
    <cofactor>
        <name>NAD(+)</name>
        <dbReference type="ChEBI" id="CHEBI:57540"/>
    </cofactor>
</comment>
<comment type="biophysicochemical properties">
    <kinetics>
        <KM evidence="3">0.31 mM for D-glucose 6-phosphate</KM>
        <KM evidence="3">0.13 uM for NAD(+)</KM>
        <text>kcat is 5.2 min(-1) for D-glucose 6-phosphate. kcat is 4.8 min(-1) for NAD(+).</text>
    </kinetics>
</comment>
<comment type="pathway">
    <text>Polyol metabolism; myo-inositol biosynthesis; myo-inositol from D-glucose 6-phosphate: step 1/2.</text>
</comment>
<comment type="subcellular location">
    <subcellularLocation>
        <location evidence="1 3">Cytoplasm</location>
    </subcellularLocation>
</comment>
<comment type="tissue specificity">
    <text evidence="1 3">Expressed in siliques, leaves, roots, seed endosperm, but not in embryos. Highest expression in roots. Confined to vascular tissue and hydathodes of leaves.</text>
</comment>
<comment type="disruption phenotype">
    <text evidence="2">Lethal when homozygous.</text>
</comment>
<comment type="similarity">
    <text evidence="4">Belongs to the myo-inositol 1-phosphate synthase family.</text>
</comment>
<organism>
    <name type="scientific">Arabidopsis thaliana</name>
    <name type="common">Mouse-ear cress</name>
    <dbReference type="NCBI Taxonomy" id="3702"/>
    <lineage>
        <taxon>Eukaryota</taxon>
        <taxon>Viridiplantae</taxon>
        <taxon>Streptophyta</taxon>
        <taxon>Embryophyta</taxon>
        <taxon>Tracheophyta</taxon>
        <taxon>Spermatophyta</taxon>
        <taxon>Magnoliopsida</taxon>
        <taxon>eudicotyledons</taxon>
        <taxon>Gunneridae</taxon>
        <taxon>Pentapetalae</taxon>
        <taxon>rosids</taxon>
        <taxon>malvids</taxon>
        <taxon>Brassicales</taxon>
        <taxon>Brassicaceae</taxon>
        <taxon>Camelineae</taxon>
        <taxon>Arabidopsis</taxon>
    </lineage>
</organism>
<gene>
    <name type="primary">IPS3</name>
    <name type="synonym">MIPS3</name>
    <name type="ordered locus">At5g10170</name>
    <name type="ORF">T31P16_160</name>
</gene>
<accession>Q9LX12</accession>
<protein>
    <recommendedName>
        <fullName>Probable inositol 3-phosphate synthase isozyme 3</fullName>
        <shortName>AtIPS3</shortName>
        <shortName>MIP synthase 3</shortName>
        <ecNumber>5.5.1.4</ecNumber>
    </recommendedName>
    <alternativeName>
        <fullName>Myo-inositol 1-phosphate synthase 3</fullName>
        <shortName>AtMIPS 3</shortName>
        <shortName>MI-1-P synthase 3</shortName>
    </alternativeName>
</protein>
<sequence length="510" mass="56418">MFIESFKVESPNVKYTENEIHSVYDYQTTELVHENKNGAFQWTVKPKTVKYEFKTDTHVPKLGVMLVGWGGNNGSTLTAGVIANREGISWATKEKVQQANYFGSLTQASSIRVGSFNGEEIYAPFKSLLPMVNPEEIVFGGWDISDMNLADAMARAKVLDIDLQKQMRPFMEHMVPLPGIFDPDFIAANQGSRANHVIKGTKKQQLEQVIKDIREFKEKNKVDKVVVLWTANTERYSNVVVGLNDTTENLMSSLDKDEAEISPSTLYAIACVLENVPFINGSPQNTFVPGLIELAIKRNCLIGGDDFKSGQTKMKSVLVDFLVGAGIKPTSIVSYNHLGNNDGMNLSAPQTFRSKEISKSNVVDDMVGSNGILYEPGEHPDHVVVIKYVPCVGDSKRAMDEYTSEIFMGGKNTIVMHNTCEDSLLAAPIILDLVLLAELTTRIQFMSENEGKFHSFHPVATLLSYLSKAPLVPPGTPVVNALSKQRAMLENVLRACVGLAPENNMILEYK</sequence>
<feature type="chain" id="PRO_0000195188" description="Probable inositol 3-phosphate synthase isozyme 3">
    <location>
        <begin position="1"/>
        <end position="510"/>
    </location>
</feature>
<proteinExistence type="evidence at protein level"/>
<name>INO3_ARATH</name>
<dbReference type="EC" id="5.5.1.4"/>
<dbReference type="EMBL" id="AL356332">
    <property type="protein sequence ID" value="CAB92058.1"/>
    <property type="molecule type" value="Genomic_DNA"/>
</dbReference>
<dbReference type="EMBL" id="CP002688">
    <property type="protein sequence ID" value="AED91504.1"/>
    <property type="molecule type" value="Genomic_DNA"/>
</dbReference>
<dbReference type="EMBL" id="AY065415">
    <property type="protein sequence ID" value="AAL38856.1"/>
    <property type="molecule type" value="mRNA"/>
</dbReference>
<dbReference type="EMBL" id="AY096554">
    <property type="protein sequence ID" value="AAM20204.1"/>
    <property type="molecule type" value="mRNA"/>
</dbReference>
<dbReference type="PIR" id="T50021">
    <property type="entry name" value="T50021"/>
</dbReference>
<dbReference type="RefSeq" id="NP_196579.1">
    <property type="nucleotide sequence ID" value="NM_121055.4"/>
</dbReference>
<dbReference type="SMR" id="Q9LX12"/>
<dbReference type="BioGRID" id="16159">
    <property type="interactions" value="2"/>
</dbReference>
<dbReference type="FunCoup" id="Q9LX12">
    <property type="interactions" value="2080"/>
</dbReference>
<dbReference type="STRING" id="3702.Q9LX12"/>
<dbReference type="PaxDb" id="3702-AT5G10170.1"/>
<dbReference type="ProteomicsDB" id="248459"/>
<dbReference type="EnsemblPlants" id="AT5G10170.1">
    <property type="protein sequence ID" value="AT5G10170.1"/>
    <property type="gene ID" value="AT5G10170"/>
</dbReference>
<dbReference type="GeneID" id="830881"/>
<dbReference type="Gramene" id="AT5G10170.1">
    <property type="protein sequence ID" value="AT5G10170.1"/>
    <property type="gene ID" value="AT5G10170"/>
</dbReference>
<dbReference type="KEGG" id="ath:AT5G10170"/>
<dbReference type="Araport" id="AT5G10170"/>
<dbReference type="TAIR" id="AT5G10170">
    <property type="gene designation" value="MIPS3"/>
</dbReference>
<dbReference type="eggNOG" id="KOG0693">
    <property type="taxonomic scope" value="Eukaryota"/>
</dbReference>
<dbReference type="HOGENOM" id="CLU_021486_2_0_1"/>
<dbReference type="InParanoid" id="Q9LX12"/>
<dbReference type="OMA" id="TTRIQFM"/>
<dbReference type="PhylomeDB" id="Q9LX12"/>
<dbReference type="BioCyc" id="ARA:AT5G10170-MONOMER"/>
<dbReference type="BRENDA" id="5.5.1.4">
    <property type="organism ID" value="399"/>
</dbReference>
<dbReference type="SABIO-RK" id="Q9LX12"/>
<dbReference type="UniPathway" id="UPA00823">
    <property type="reaction ID" value="UER00787"/>
</dbReference>
<dbReference type="PRO" id="PR:Q9LX12"/>
<dbReference type="Proteomes" id="UP000006548">
    <property type="component" value="Chromosome 5"/>
</dbReference>
<dbReference type="ExpressionAtlas" id="Q9LX12">
    <property type="expression patterns" value="baseline and differential"/>
</dbReference>
<dbReference type="GO" id="GO:0005737">
    <property type="term" value="C:cytoplasm"/>
    <property type="evidence" value="ECO:0000314"/>
    <property type="project" value="TAIR"/>
</dbReference>
<dbReference type="GO" id="GO:0004512">
    <property type="term" value="F:inositol-3-phosphate synthase activity"/>
    <property type="evidence" value="ECO:0000316"/>
    <property type="project" value="TAIR"/>
</dbReference>
<dbReference type="GO" id="GO:0009793">
    <property type="term" value="P:embryo development ending in seed dormancy"/>
    <property type="evidence" value="ECO:0000316"/>
    <property type="project" value="TAIR"/>
</dbReference>
<dbReference type="GO" id="GO:0006021">
    <property type="term" value="P:inositol biosynthetic process"/>
    <property type="evidence" value="ECO:0007669"/>
    <property type="project" value="UniProtKB-UniPathway"/>
</dbReference>
<dbReference type="GO" id="GO:0008654">
    <property type="term" value="P:phospholipid biosynthetic process"/>
    <property type="evidence" value="ECO:0007669"/>
    <property type="project" value="UniProtKB-KW"/>
</dbReference>
<dbReference type="FunFam" id="3.40.50.720:FF:000107">
    <property type="entry name" value="inositol-3-phosphate synthase"/>
    <property type="match status" value="1"/>
</dbReference>
<dbReference type="FunFam" id="3.40.50.720:FF:000069">
    <property type="entry name" value="Inositol-3-phosphate synthase 1"/>
    <property type="match status" value="1"/>
</dbReference>
<dbReference type="FunFam" id="3.30.360.10:FF:000055">
    <property type="entry name" value="Putative myo-inositol-1-phosphate synthase"/>
    <property type="match status" value="1"/>
</dbReference>
<dbReference type="Gene3D" id="3.40.50.720">
    <property type="entry name" value="NAD(P)-binding Rossmann-like Domain"/>
    <property type="match status" value="2"/>
</dbReference>
<dbReference type="InterPro" id="IPR002587">
    <property type="entry name" value="Myo-inos-1-P_Synthase"/>
</dbReference>
<dbReference type="InterPro" id="IPR013021">
    <property type="entry name" value="Myo-inos-1-P_Synthase_GAPDH"/>
</dbReference>
<dbReference type="InterPro" id="IPR036291">
    <property type="entry name" value="NAD(P)-bd_dom_sf"/>
</dbReference>
<dbReference type="PANTHER" id="PTHR11510">
    <property type="entry name" value="MYO-INOSITOL-1 PHOSPHATE SYNTHASE"/>
    <property type="match status" value="1"/>
</dbReference>
<dbReference type="Pfam" id="PF01658">
    <property type="entry name" value="Inos-1-P_synth"/>
    <property type="match status" value="1"/>
</dbReference>
<dbReference type="Pfam" id="PF07994">
    <property type="entry name" value="NAD_binding_5"/>
    <property type="match status" value="1"/>
</dbReference>
<dbReference type="PIRSF" id="PIRSF015578">
    <property type="entry name" value="Myoinos-ppht_syn"/>
    <property type="match status" value="1"/>
</dbReference>
<dbReference type="SUPFAM" id="SSF55347">
    <property type="entry name" value="Glyceraldehyde-3-phosphate dehydrogenase-like, C-terminal domain"/>
    <property type="match status" value="1"/>
</dbReference>
<dbReference type="SUPFAM" id="SSF51735">
    <property type="entry name" value="NAD(P)-binding Rossmann-fold domains"/>
    <property type="match status" value="1"/>
</dbReference>
<evidence type="ECO:0000269" key="1">
    <source>
    </source>
</evidence>
<evidence type="ECO:0000269" key="2">
    <source>
    </source>
</evidence>
<evidence type="ECO:0000269" key="3">
    <source>
    </source>
</evidence>
<evidence type="ECO:0000305" key="4"/>
<reference key="1">
    <citation type="journal article" date="2000" name="Nature">
        <title>Sequence and analysis of chromosome 5 of the plant Arabidopsis thaliana.</title>
        <authorList>
            <person name="Tabata S."/>
            <person name="Kaneko T."/>
            <person name="Nakamura Y."/>
            <person name="Kotani H."/>
            <person name="Kato T."/>
            <person name="Asamizu E."/>
            <person name="Miyajima N."/>
            <person name="Sasamoto S."/>
            <person name="Kimura T."/>
            <person name="Hosouchi T."/>
            <person name="Kawashima K."/>
            <person name="Kohara M."/>
            <person name="Matsumoto M."/>
            <person name="Matsuno A."/>
            <person name="Muraki A."/>
            <person name="Nakayama S."/>
            <person name="Nakazaki N."/>
            <person name="Naruo K."/>
            <person name="Okumura S."/>
            <person name="Shinpo S."/>
            <person name="Takeuchi C."/>
            <person name="Wada T."/>
            <person name="Watanabe A."/>
            <person name="Yamada M."/>
            <person name="Yasuda M."/>
            <person name="Sato S."/>
            <person name="de la Bastide M."/>
            <person name="Huang E."/>
            <person name="Spiegel L."/>
            <person name="Gnoj L."/>
            <person name="O'Shaughnessy A."/>
            <person name="Preston R."/>
            <person name="Habermann K."/>
            <person name="Murray J."/>
            <person name="Johnson D."/>
            <person name="Rohlfing T."/>
            <person name="Nelson J."/>
            <person name="Stoneking T."/>
            <person name="Pepin K."/>
            <person name="Spieth J."/>
            <person name="Sekhon M."/>
            <person name="Armstrong J."/>
            <person name="Becker M."/>
            <person name="Belter E."/>
            <person name="Cordum H."/>
            <person name="Cordes M."/>
            <person name="Courtney L."/>
            <person name="Courtney W."/>
            <person name="Dante M."/>
            <person name="Du H."/>
            <person name="Edwards J."/>
            <person name="Fryman J."/>
            <person name="Haakensen B."/>
            <person name="Lamar E."/>
            <person name="Latreille P."/>
            <person name="Leonard S."/>
            <person name="Meyer R."/>
            <person name="Mulvaney E."/>
            <person name="Ozersky P."/>
            <person name="Riley A."/>
            <person name="Strowmatt C."/>
            <person name="Wagner-McPherson C."/>
            <person name="Wollam A."/>
            <person name="Yoakum M."/>
            <person name="Bell M."/>
            <person name="Dedhia N."/>
            <person name="Parnell L."/>
            <person name="Shah R."/>
            <person name="Rodriguez M."/>
            <person name="Hoon See L."/>
            <person name="Vil D."/>
            <person name="Baker J."/>
            <person name="Kirchoff K."/>
            <person name="Toth K."/>
            <person name="King L."/>
            <person name="Bahret A."/>
            <person name="Miller B."/>
            <person name="Marra M.A."/>
            <person name="Martienssen R."/>
            <person name="McCombie W.R."/>
            <person name="Wilson R.K."/>
            <person name="Murphy G."/>
            <person name="Bancroft I."/>
            <person name="Volckaert G."/>
            <person name="Wambutt R."/>
            <person name="Duesterhoeft A."/>
            <person name="Stiekema W."/>
            <person name="Pohl T."/>
            <person name="Entian K.-D."/>
            <person name="Terryn N."/>
            <person name="Hartley N."/>
            <person name="Bent E."/>
            <person name="Johnson S."/>
            <person name="Langham S.-A."/>
            <person name="McCullagh B."/>
            <person name="Robben J."/>
            <person name="Grymonprez B."/>
            <person name="Zimmermann W."/>
            <person name="Ramsperger U."/>
            <person name="Wedler H."/>
            <person name="Balke K."/>
            <person name="Wedler E."/>
            <person name="Peters S."/>
            <person name="van Staveren M."/>
            <person name="Dirkse W."/>
            <person name="Mooijman P."/>
            <person name="Klein Lankhorst R."/>
            <person name="Weitzenegger T."/>
            <person name="Bothe G."/>
            <person name="Rose M."/>
            <person name="Hauf J."/>
            <person name="Berneiser S."/>
            <person name="Hempel S."/>
            <person name="Feldpausch M."/>
            <person name="Lamberth S."/>
            <person name="Villarroel R."/>
            <person name="Gielen J."/>
            <person name="Ardiles W."/>
            <person name="Bents O."/>
            <person name="Lemcke K."/>
            <person name="Kolesov G."/>
            <person name="Mayer K.F.X."/>
            <person name="Rudd S."/>
            <person name="Schoof H."/>
            <person name="Schueller C."/>
            <person name="Zaccaria P."/>
            <person name="Mewes H.-W."/>
            <person name="Bevan M."/>
            <person name="Fransz P.F."/>
        </authorList>
    </citation>
    <scope>NUCLEOTIDE SEQUENCE [LARGE SCALE GENOMIC DNA]</scope>
    <source>
        <strain>cv. Columbia</strain>
    </source>
</reference>
<reference key="2">
    <citation type="journal article" date="2017" name="Plant J.">
        <title>Araport11: a complete reannotation of the Arabidopsis thaliana reference genome.</title>
        <authorList>
            <person name="Cheng C.Y."/>
            <person name="Krishnakumar V."/>
            <person name="Chan A.P."/>
            <person name="Thibaud-Nissen F."/>
            <person name="Schobel S."/>
            <person name="Town C.D."/>
        </authorList>
    </citation>
    <scope>GENOME REANNOTATION</scope>
    <source>
        <strain>cv. Columbia</strain>
    </source>
</reference>
<reference key="3">
    <citation type="journal article" date="2003" name="Science">
        <title>Empirical analysis of transcriptional activity in the Arabidopsis genome.</title>
        <authorList>
            <person name="Yamada K."/>
            <person name="Lim J."/>
            <person name="Dale J.M."/>
            <person name="Chen H."/>
            <person name="Shinn P."/>
            <person name="Palm C.J."/>
            <person name="Southwick A.M."/>
            <person name="Wu H.C."/>
            <person name="Kim C.J."/>
            <person name="Nguyen M."/>
            <person name="Pham P.K."/>
            <person name="Cheuk R.F."/>
            <person name="Karlin-Newmann G."/>
            <person name="Liu S.X."/>
            <person name="Lam B."/>
            <person name="Sakano H."/>
            <person name="Wu T."/>
            <person name="Yu G."/>
            <person name="Miranda M."/>
            <person name="Quach H.L."/>
            <person name="Tripp M."/>
            <person name="Chang C.H."/>
            <person name="Lee J.M."/>
            <person name="Toriumi M.J."/>
            <person name="Chan M.M."/>
            <person name="Tang C.C."/>
            <person name="Onodera C.S."/>
            <person name="Deng J.M."/>
            <person name="Akiyama K."/>
            <person name="Ansari Y."/>
            <person name="Arakawa T."/>
            <person name="Banh J."/>
            <person name="Banno F."/>
            <person name="Bowser L."/>
            <person name="Brooks S.Y."/>
            <person name="Carninci P."/>
            <person name="Chao Q."/>
            <person name="Choy N."/>
            <person name="Enju A."/>
            <person name="Goldsmith A.D."/>
            <person name="Gurjal M."/>
            <person name="Hansen N.F."/>
            <person name="Hayashizaki Y."/>
            <person name="Johnson-Hopson C."/>
            <person name="Hsuan V.W."/>
            <person name="Iida K."/>
            <person name="Karnes M."/>
            <person name="Khan S."/>
            <person name="Koesema E."/>
            <person name="Ishida J."/>
            <person name="Jiang P.X."/>
            <person name="Jones T."/>
            <person name="Kawai J."/>
            <person name="Kamiya A."/>
            <person name="Meyers C."/>
            <person name="Nakajima M."/>
            <person name="Narusaka M."/>
            <person name="Seki M."/>
            <person name="Sakurai T."/>
            <person name="Satou M."/>
            <person name="Tamse R."/>
            <person name="Vaysberg M."/>
            <person name="Wallender E.K."/>
            <person name="Wong C."/>
            <person name="Yamamura Y."/>
            <person name="Yuan S."/>
            <person name="Shinozaki K."/>
            <person name="Davis R.W."/>
            <person name="Theologis A."/>
            <person name="Ecker J.R."/>
        </authorList>
    </citation>
    <scope>NUCLEOTIDE SEQUENCE [LARGE SCALE MRNA]</scope>
    <source>
        <strain>cv. Columbia</strain>
    </source>
</reference>
<reference key="4">
    <citation type="journal article" date="2008" name="J. Exp. Bot.">
        <title>Localization of myo-inositol-1-phosphate synthase to the endosperm in developing seeds of Arabidopsis.</title>
        <authorList>
            <person name="Mitsuhashi N."/>
            <person name="Kondo M."/>
            <person name="Nakaune S."/>
            <person name="Ohnishi M."/>
            <person name="Hayashi M."/>
            <person name="Hara-Nishimura I."/>
            <person name="Richardson A."/>
            <person name="Fukaki H."/>
            <person name="Nishimura M."/>
            <person name="Mimura T."/>
        </authorList>
    </citation>
    <scope>TISSUE SPECIFICITY</scope>
    <scope>SUBCELLULAR LOCATION</scope>
    <source>
        <strain>cv. Columbia</strain>
    </source>
</reference>
<reference key="5">
    <citation type="journal article" date="2009" name="PLoS ONE">
        <title>Crosstalks between myo-inositol metabolism, programmed cell death and basal immunity in Arabidopsis.</title>
        <authorList>
            <person name="Meng P.H."/>
            <person name="Raynaud C."/>
            <person name="Tcherkez G."/>
            <person name="Blanchet S."/>
            <person name="Massoud K."/>
            <person name="Domenichini S."/>
            <person name="Henry Y."/>
            <person name="Soubigou-Taconnat L."/>
            <person name="Lelarge-Trouverie C."/>
            <person name="Saindrenan P."/>
            <person name="Renou J.P."/>
            <person name="Bergounioux C."/>
        </authorList>
    </citation>
    <scope>DISRUPTION PHENOTYPE</scope>
</reference>
<reference key="6">
    <citation type="journal article" date="2010" name="Plant Cell">
        <title>The Arabidopsis thaliana Myo-inositol 1-phosphate synthase1 gene is required for Myo-inositol synthesis and suppression of cell death.</title>
        <authorList>
            <person name="Donahue J.L."/>
            <person name="Alford S.R."/>
            <person name="Torabinejad J."/>
            <person name="Kerwin R.E."/>
            <person name="Nourbakhsh A."/>
            <person name="Ray W.K."/>
            <person name="Hernick M."/>
            <person name="Huang X."/>
            <person name="Lyons B.M."/>
            <person name="Hein P.P."/>
            <person name="Gillaspy G.E."/>
        </authorList>
    </citation>
    <scope>FUNCTION</scope>
    <scope>CATALYTIC ACTIVITY</scope>
    <scope>BIOPHYSICOCHEMICAL PROPERTIES</scope>
    <scope>TISSUE SPECIFICITY</scope>
    <scope>SUBCELLULAR LOCATION</scope>
</reference>
<keyword id="KW-0963">Cytoplasm</keyword>
<keyword id="KW-0398">Inositol biosynthesis</keyword>
<keyword id="KW-0413">Isomerase</keyword>
<keyword id="KW-0444">Lipid biosynthesis</keyword>
<keyword id="KW-0443">Lipid metabolism</keyword>
<keyword id="KW-0520">NAD</keyword>
<keyword id="KW-0594">Phospholipid biosynthesis</keyword>
<keyword id="KW-1208">Phospholipid metabolism</keyword>
<keyword id="KW-1185">Reference proteome</keyword>